<accession>Q99467</accession>
<accession>B2R7Z7</accession>
<accession>Q32MM5</accession>
<sequence length="661" mass="74179">MAFDVSCFFWVVLFSAGCKVITSWDQMCIEKEANKTYNCENLGLSEIPDTLPNTTEFLEFSFNFLPTIHNRTFSRLMNLTFLDLTRCQINWIHEDTFQSHHQLSTLVLTGNPLIFMAETSLNGPKSLKHLFLIQTGISNLEFIPVHNLENLESLYLGSNHISSIKFPKDFPARNLKVLDFQNNAIHYISREDMRSLEQAINLSLNFNGNNVKGIELGAFDSTIFQSLNFGGTPNLSVIFNGLQNSTTQSLWLGTFEDIDDEDISSAMLKGLCEMSVESLNLQEHRFSDISSTTFQCFTQLQELDLTATHLKGLPSGMKGLNLLKKLVLSVNHFDQLCQISAANFPSLTHLYIRGNVKKLHLGVGCLEKLGNLQTLDLSHNDIEASDCCSLQLKNLSHLQTLNLSHNEPLGLQSQAFKECPQLELLDLAFTRLHINAPQSPFQNLHFLQVLNLTYCFLDTSNQHLLAGLPVLRHLNLKGNHFQDGTITKTNLLQTVGSLEVLILSSCGLLSIDQQAFHSLGKMSHVDLSHNSLTCDSIDSLSHLKGIYLNLAANSINIISPRLLPILSQQSTINLSHNPLDCTCSNIHFLTWYKENLHKLEGSEETTCANPPSLRGVKLSDVKLSCGITAIGIFFLIVFLLLLAILLFFAVKYLLRWKYQHI</sequence>
<feature type="signal peptide" evidence="3">
    <location>
        <begin position="1"/>
        <end position="23"/>
    </location>
</feature>
<feature type="chain" id="PRO_0000034741" description="CD180 antigen">
    <location>
        <begin position="24"/>
        <end position="661"/>
    </location>
</feature>
<feature type="topological domain" description="Extracellular" evidence="2">
    <location>
        <begin position="24"/>
        <end position="626"/>
    </location>
</feature>
<feature type="transmembrane region" description="Helical" evidence="2">
    <location>
        <begin position="627"/>
        <end position="650"/>
    </location>
</feature>
<feature type="topological domain" description="Cytoplasmic" evidence="2">
    <location>
        <begin position="651"/>
        <end position="661"/>
    </location>
</feature>
<feature type="domain" description="LRRNT">
    <location>
        <begin position="33"/>
        <end position="53"/>
    </location>
</feature>
<feature type="repeat" description="LRR 1">
    <location>
        <begin position="54"/>
        <end position="75"/>
    </location>
</feature>
<feature type="repeat" description="LRR 2">
    <location>
        <begin position="78"/>
        <end position="99"/>
    </location>
</feature>
<feature type="repeat" description="LRR 3">
    <location>
        <begin position="102"/>
        <end position="123"/>
    </location>
</feature>
<feature type="repeat" description="LRR 4">
    <location>
        <begin position="126"/>
        <end position="147"/>
    </location>
</feature>
<feature type="repeat" description="LRR 5">
    <location>
        <begin position="150"/>
        <end position="171"/>
    </location>
</feature>
<feature type="repeat" description="LRR 6">
    <location>
        <begin position="174"/>
        <end position="195"/>
    </location>
</feature>
<feature type="repeat" description="LRR 7">
    <location>
        <begin position="201"/>
        <end position="221"/>
    </location>
</feature>
<feature type="repeat" description="LRR 8">
    <location>
        <begin position="275"/>
        <end position="296"/>
    </location>
</feature>
<feature type="repeat" description="LRR 9">
    <location>
        <begin position="299"/>
        <end position="320"/>
    </location>
</feature>
<feature type="repeat" description="LRR 10">
    <location>
        <begin position="322"/>
        <end position="343"/>
    </location>
</feature>
<feature type="repeat" description="LRR 11">
    <location>
        <begin position="346"/>
        <end position="366"/>
    </location>
</feature>
<feature type="repeat" description="LRR 12">
    <location>
        <begin position="371"/>
        <end position="391"/>
    </location>
</feature>
<feature type="repeat" description="LRR 13">
    <location>
        <begin position="397"/>
        <end position="418"/>
    </location>
</feature>
<feature type="repeat" description="LRR 14">
    <location>
        <begin position="421"/>
        <end position="442"/>
    </location>
</feature>
<feature type="repeat" description="LRR 15">
    <location>
        <begin position="446"/>
        <end position="466"/>
    </location>
</feature>
<feature type="repeat" description="LRR 16">
    <location>
        <begin position="470"/>
        <end position="493"/>
    </location>
</feature>
<feature type="repeat" description="LRR 17">
    <location>
        <begin position="497"/>
        <end position="518"/>
    </location>
</feature>
<feature type="repeat" description="LRR 18">
    <location>
        <begin position="521"/>
        <end position="544"/>
    </location>
</feature>
<feature type="repeat" description="LRR 19">
    <location>
        <begin position="546"/>
        <end position="564"/>
    </location>
</feature>
<feature type="domain" description="LRRCT">
    <location>
        <begin position="577"/>
        <end position="627"/>
    </location>
</feature>
<feature type="glycosylation site" description="N-linked (GlcNAc...) asparagine" evidence="2">
    <location>
        <position position="34"/>
    </location>
</feature>
<feature type="glycosylation site" description="N-linked (GlcNAc...) asparagine" evidence="2">
    <location>
        <position position="53"/>
    </location>
</feature>
<feature type="glycosylation site" description="N-linked (GlcNAc...) asparagine" evidence="2">
    <location>
        <position position="70"/>
    </location>
</feature>
<feature type="glycosylation site" description="N-linked (GlcNAc...) asparagine" evidence="4">
    <location>
        <position position="78"/>
    </location>
</feature>
<feature type="glycosylation site" description="N-linked (GlcNAc...) asparagine" evidence="2">
    <location>
        <position position="201"/>
    </location>
</feature>
<feature type="glycosylation site" description="N-linked (GlcNAc...) asparagine" evidence="2">
    <location>
        <position position="234"/>
    </location>
</feature>
<feature type="glycosylation site" description="N-linked (GlcNAc...) asparagine" evidence="2">
    <location>
        <position position="244"/>
    </location>
</feature>
<feature type="glycosylation site" description="N-linked (GlcNAc...) asparagine" evidence="2">
    <location>
        <position position="394"/>
    </location>
</feature>
<feature type="glycosylation site" description="N-linked (GlcNAc...) asparagine" evidence="5">
    <location>
        <position position="402"/>
    </location>
</feature>
<feature type="glycosylation site" description="N-linked (GlcNAc...) asparagine" evidence="5">
    <location>
        <position position="451"/>
    </location>
</feature>
<feature type="glycosylation site" description="N-linked (GlcNAc...) asparagine" evidence="2">
    <location>
        <position position="573"/>
    </location>
</feature>
<feature type="sequence variant" id="VAR_057298" description="In dbSNP:rs5744463.">
    <original>V</original>
    <variation>L</variation>
    <location>
        <position position="20"/>
    </location>
</feature>
<feature type="sequence variant" id="VAR_021978" description="In dbSNP:rs16875312.">
    <original>N</original>
    <variation>K</variation>
    <location>
        <position position="53"/>
    </location>
</feature>
<feature type="sequence variant" id="VAR_021979" description="In dbSNP:rs2230520.">
    <original>S</original>
    <variation>R</variation>
    <location>
        <position position="99"/>
    </location>
</feature>
<feature type="sequence variant" id="VAR_057299" description="In dbSNP:rs5744525.">
    <original>D</original>
    <variation>N</variation>
    <location>
        <position position="259"/>
    </location>
</feature>
<feature type="sequence variant" id="VAR_061859" description="In dbSNP:rs56752081.">
    <original>V</original>
    <variation>M</variation>
    <location>
        <position position="356"/>
    </location>
</feature>
<feature type="sequence variant" id="VAR_057300" description="In dbSNP:rs2230523.">
    <original>T</original>
    <variation>A</variation>
    <location>
        <position position="430"/>
    </location>
</feature>
<feature type="sequence variant" id="VAR_057301" description="In dbSNP:rs2230524.">
    <original>F</original>
    <variation>L</variation>
    <location>
        <position position="648"/>
    </location>
</feature>
<feature type="sequence conflict" description="In Ref. 1; BAA12019, 2; BAG35994, 4; EAW51318 and 5; AAI09070/AAI09071." evidence="6" ref="1 2 4 5">
    <original>I</original>
    <variation>V</variation>
    <location>
        <position position="223"/>
    </location>
</feature>
<feature type="strand" evidence="7">
    <location>
        <begin position="29"/>
        <end position="32"/>
    </location>
</feature>
<feature type="turn" evidence="7">
    <location>
        <begin position="33"/>
        <end position="35"/>
    </location>
</feature>
<feature type="strand" evidence="7">
    <location>
        <begin position="36"/>
        <end position="38"/>
    </location>
</feature>
<feature type="strand" evidence="7">
    <location>
        <begin position="57"/>
        <end position="59"/>
    </location>
</feature>
<feature type="strand" evidence="7">
    <location>
        <begin position="66"/>
        <end position="68"/>
    </location>
</feature>
<feature type="turn" evidence="7">
    <location>
        <begin position="70"/>
        <end position="75"/>
    </location>
</feature>
<feature type="strand" evidence="7">
    <location>
        <begin position="80"/>
        <end position="83"/>
    </location>
</feature>
<feature type="turn" evidence="7">
    <location>
        <begin position="94"/>
        <end position="99"/>
    </location>
</feature>
<feature type="strand" evidence="7">
    <location>
        <begin position="105"/>
        <end position="107"/>
    </location>
</feature>
<feature type="turn" evidence="7">
    <location>
        <begin position="118"/>
        <end position="121"/>
    </location>
</feature>
<feature type="strand" evidence="7">
    <location>
        <begin position="129"/>
        <end position="131"/>
    </location>
</feature>
<feature type="helix" evidence="7">
    <location>
        <begin position="140"/>
        <end position="142"/>
    </location>
</feature>
<feature type="strand" evidence="7">
    <location>
        <begin position="153"/>
        <end position="155"/>
    </location>
</feature>
<feature type="strand" evidence="7">
    <location>
        <begin position="177"/>
        <end position="179"/>
    </location>
</feature>
<feature type="helix" evidence="7">
    <location>
        <begin position="190"/>
        <end position="194"/>
    </location>
</feature>
<feature type="turn" evidence="7">
    <location>
        <begin position="195"/>
        <end position="198"/>
    </location>
</feature>
<feature type="strand" evidence="7">
    <location>
        <begin position="200"/>
        <end position="205"/>
    </location>
</feature>
<feature type="turn" evidence="7">
    <location>
        <begin position="216"/>
        <end position="221"/>
    </location>
</feature>
<feature type="strand" evidence="7">
    <location>
        <begin position="223"/>
        <end position="228"/>
    </location>
</feature>
<feature type="helix" evidence="7">
    <location>
        <begin position="235"/>
        <end position="241"/>
    </location>
</feature>
<feature type="turn" evidence="7">
    <location>
        <begin position="242"/>
        <end position="244"/>
    </location>
</feature>
<feature type="strand" evidence="7">
    <location>
        <begin position="246"/>
        <end position="251"/>
    </location>
</feature>
<feature type="turn" evidence="7">
    <location>
        <begin position="265"/>
        <end position="268"/>
    </location>
</feature>
<feature type="helix" evidence="7">
    <location>
        <begin position="269"/>
        <end position="273"/>
    </location>
</feature>
<feature type="strand" evidence="7">
    <location>
        <begin position="274"/>
        <end position="280"/>
    </location>
</feature>
<feature type="strand" evidence="7">
    <location>
        <begin position="286"/>
        <end position="288"/>
    </location>
</feature>
<feature type="turn" evidence="7">
    <location>
        <begin position="291"/>
        <end position="294"/>
    </location>
</feature>
<feature type="helix" evidence="7">
    <location>
        <begin position="296"/>
        <end position="299"/>
    </location>
</feature>
<feature type="strand" evidence="7">
    <location>
        <begin position="301"/>
        <end position="304"/>
    </location>
</feature>
<feature type="strand" evidence="7">
    <location>
        <begin position="325"/>
        <end position="327"/>
    </location>
</feature>
<feature type="helix" evidence="7">
    <location>
        <begin position="336"/>
        <end position="339"/>
    </location>
</feature>
<feature type="helix" evidence="7">
    <location>
        <begin position="341"/>
        <end position="343"/>
    </location>
</feature>
<feature type="strand" evidence="7">
    <location>
        <begin position="349"/>
        <end position="351"/>
    </location>
</feature>
<feature type="turn" evidence="7">
    <location>
        <begin position="365"/>
        <end position="368"/>
    </location>
</feature>
<feature type="strand" evidence="7">
    <location>
        <begin position="374"/>
        <end position="376"/>
    </location>
</feature>
<feature type="strand" evidence="7">
    <location>
        <begin position="384"/>
        <end position="388"/>
    </location>
</feature>
<feature type="turn" evidence="7">
    <location>
        <begin position="389"/>
        <end position="391"/>
    </location>
</feature>
<feature type="strand" evidence="7">
    <location>
        <begin position="400"/>
        <end position="402"/>
    </location>
</feature>
<feature type="strand" evidence="7">
    <location>
        <begin position="409"/>
        <end position="411"/>
    </location>
</feature>
<feature type="turn" evidence="7">
    <location>
        <begin position="413"/>
        <end position="418"/>
    </location>
</feature>
<feature type="strand" evidence="7">
    <location>
        <begin position="424"/>
        <end position="426"/>
    </location>
</feature>
<feature type="turn" evidence="7">
    <location>
        <begin position="440"/>
        <end position="443"/>
    </location>
</feature>
<feature type="strand" evidence="7">
    <location>
        <begin position="449"/>
        <end position="451"/>
    </location>
</feature>
<feature type="turn" evidence="7">
    <location>
        <begin position="462"/>
        <end position="467"/>
    </location>
</feature>
<feature type="strand" evidence="7">
    <location>
        <begin position="473"/>
        <end position="475"/>
    </location>
</feature>
<feature type="helix" evidence="7">
    <location>
        <begin position="482"/>
        <end position="484"/>
    </location>
</feature>
<feature type="helix" evidence="7">
    <location>
        <begin position="491"/>
        <end position="494"/>
    </location>
</feature>
<feature type="strand" evidence="7">
    <location>
        <begin position="500"/>
        <end position="502"/>
    </location>
</feature>
<feature type="turn" evidence="7">
    <location>
        <begin position="513"/>
        <end position="518"/>
    </location>
</feature>
<feature type="strand" evidence="7">
    <location>
        <begin position="524"/>
        <end position="526"/>
    </location>
</feature>
<feature type="helix" evidence="7">
    <location>
        <begin position="534"/>
        <end position="540"/>
    </location>
</feature>
<feature type="strand" evidence="7">
    <location>
        <begin position="547"/>
        <end position="549"/>
    </location>
</feature>
<feature type="helix" evidence="7">
    <location>
        <begin position="563"/>
        <end position="567"/>
    </location>
</feature>
<feature type="strand" evidence="7">
    <location>
        <begin position="569"/>
        <end position="573"/>
    </location>
</feature>
<feature type="helix" evidence="7">
    <location>
        <begin position="583"/>
        <end position="585"/>
    </location>
</feature>
<feature type="helix" evidence="7">
    <location>
        <begin position="586"/>
        <end position="594"/>
    </location>
</feature>
<feature type="strand" evidence="7">
    <location>
        <begin position="598"/>
        <end position="600"/>
    </location>
</feature>
<feature type="strand" evidence="7">
    <location>
        <begin position="607"/>
        <end position="613"/>
    </location>
</feature>
<feature type="turn" evidence="7">
    <location>
        <begin position="618"/>
        <end position="620"/>
    </location>
</feature>
<proteinExistence type="evidence at protein level"/>
<reference key="1">
    <citation type="journal article" date="1996" name="Genomics">
        <title>Molecular cloning of a human RP105 homologue and chromosomal localization of the mouse and human RP105 genes (Ly64 and LY64).</title>
        <authorList>
            <person name="Miura Y."/>
            <person name="Miyake K."/>
            <person name="Yamashita Y."/>
            <person name="Shimazu R."/>
            <person name="Copeland N.G."/>
            <person name="Gilbert D.J."/>
            <person name="Jenkins N.A."/>
            <person name="Inazawa J."/>
            <person name="Abe T."/>
            <person name="Kimoto M."/>
        </authorList>
    </citation>
    <scope>NUCLEOTIDE SEQUENCE [MRNA]</scope>
    <source>
        <tissue>B-cell lymphoma</tissue>
    </source>
</reference>
<reference key="2">
    <citation type="journal article" date="2004" name="Nat. Genet.">
        <title>Complete sequencing and characterization of 21,243 full-length human cDNAs.</title>
        <authorList>
            <person name="Ota T."/>
            <person name="Suzuki Y."/>
            <person name="Nishikawa T."/>
            <person name="Otsuki T."/>
            <person name="Sugiyama T."/>
            <person name="Irie R."/>
            <person name="Wakamatsu A."/>
            <person name="Hayashi K."/>
            <person name="Sato H."/>
            <person name="Nagai K."/>
            <person name="Kimura K."/>
            <person name="Makita H."/>
            <person name="Sekine M."/>
            <person name="Obayashi M."/>
            <person name="Nishi T."/>
            <person name="Shibahara T."/>
            <person name="Tanaka T."/>
            <person name="Ishii S."/>
            <person name="Yamamoto J."/>
            <person name="Saito K."/>
            <person name="Kawai Y."/>
            <person name="Isono Y."/>
            <person name="Nakamura Y."/>
            <person name="Nagahari K."/>
            <person name="Murakami K."/>
            <person name="Yasuda T."/>
            <person name="Iwayanagi T."/>
            <person name="Wagatsuma M."/>
            <person name="Shiratori A."/>
            <person name="Sudo H."/>
            <person name="Hosoiri T."/>
            <person name="Kaku Y."/>
            <person name="Kodaira H."/>
            <person name="Kondo H."/>
            <person name="Sugawara M."/>
            <person name="Takahashi M."/>
            <person name="Kanda K."/>
            <person name="Yokoi T."/>
            <person name="Furuya T."/>
            <person name="Kikkawa E."/>
            <person name="Omura Y."/>
            <person name="Abe K."/>
            <person name="Kamihara K."/>
            <person name="Katsuta N."/>
            <person name="Sato K."/>
            <person name="Tanikawa M."/>
            <person name="Yamazaki M."/>
            <person name="Ninomiya K."/>
            <person name="Ishibashi T."/>
            <person name="Yamashita H."/>
            <person name="Murakawa K."/>
            <person name="Fujimori K."/>
            <person name="Tanai H."/>
            <person name="Kimata M."/>
            <person name="Watanabe M."/>
            <person name="Hiraoka S."/>
            <person name="Chiba Y."/>
            <person name="Ishida S."/>
            <person name="Ono Y."/>
            <person name="Takiguchi S."/>
            <person name="Watanabe S."/>
            <person name="Yosida M."/>
            <person name="Hotuta T."/>
            <person name="Kusano J."/>
            <person name="Kanehori K."/>
            <person name="Takahashi-Fujii A."/>
            <person name="Hara H."/>
            <person name="Tanase T.-O."/>
            <person name="Nomura Y."/>
            <person name="Togiya S."/>
            <person name="Komai F."/>
            <person name="Hara R."/>
            <person name="Takeuchi K."/>
            <person name="Arita M."/>
            <person name="Imose N."/>
            <person name="Musashino K."/>
            <person name="Yuuki H."/>
            <person name="Oshima A."/>
            <person name="Sasaki N."/>
            <person name="Aotsuka S."/>
            <person name="Yoshikawa Y."/>
            <person name="Matsunawa H."/>
            <person name="Ichihara T."/>
            <person name="Shiohata N."/>
            <person name="Sano S."/>
            <person name="Moriya S."/>
            <person name="Momiyama H."/>
            <person name="Satoh N."/>
            <person name="Takami S."/>
            <person name="Terashima Y."/>
            <person name="Suzuki O."/>
            <person name="Nakagawa S."/>
            <person name="Senoh A."/>
            <person name="Mizoguchi H."/>
            <person name="Goto Y."/>
            <person name="Shimizu F."/>
            <person name="Wakebe H."/>
            <person name="Hishigaki H."/>
            <person name="Watanabe T."/>
            <person name="Sugiyama A."/>
            <person name="Takemoto M."/>
            <person name="Kawakami B."/>
            <person name="Yamazaki M."/>
            <person name="Watanabe K."/>
            <person name="Kumagai A."/>
            <person name="Itakura S."/>
            <person name="Fukuzumi Y."/>
            <person name="Fujimori Y."/>
            <person name="Komiyama M."/>
            <person name="Tashiro H."/>
            <person name="Tanigami A."/>
            <person name="Fujiwara T."/>
            <person name="Ono T."/>
            <person name="Yamada K."/>
            <person name="Fujii Y."/>
            <person name="Ozaki K."/>
            <person name="Hirao M."/>
            <person name="Ohmori Y."/>
            <person name="Kawabata A."/>
            <person name="Hikiji T."/>
            <person name="Kobatake N."/>
            <person name="Inagaki H."/>
            <person name="Ikema Y."/>
            <person name="Okamoto S."/>
            <person name="Okitani R."/>
            <person name="Kawakami T."/>
            <person name="Noguchi S."/>
            <person name="Itoh T."/>
            <person name="Shigeta K."/>
            <person name="Senba T."/>
            <person name="Matsumura K."/>
            <person name="Nakajima Y."/>
            <person name="Mizuno T."/>
            <person name="Morinaga M."/>
            <person name="Sasaki M."/>
            <person name="Togashi T."/>
            <person name="Oyama M."/>
            <person name="Hata H."/>
            <person name="Watanabe M."/>
            <person name="Komatsu T."/>
            <person name="Mizushima-Sugano J."/>
            <person name="Satoh T."/>
            <person name="Shirai Y."/>
            <person name="Takahashi Y."/>
            <person name="Nakagawa K."/>
            <person name="Okumura K."/>
            <person name="Nagase T."/>
            <person name="Nomura N."/>
            <person name="Kikuchi H."/>
            <person name="Masuho Y."/>
            <person name="Yamashita R."/>
            <person name="Nakai K."/>
            <person name="Yada T."/>
            <person name="Nakamura Y."/>
            <person name="Ohara O."/>
            <person name="Isogai T."/>
            <person name="Sugano S."/>
        </authorList>
    </citation>
    <scope>NUCLEOTIDE SEQUENCE [LARGE SCALE MRNA]</scope>
    <source>
        <tissue>Lung</tissue>
    </source>
</reference>
<reference key="3">
    <citation type="journal article" date="2004" name="Nature">
        <title>The DNA sequence and comparative analysis of human chromosome 5.</title>
        <authorList>
            <person name="Schmutz J."/>
            <person name="Martin J."/>
            <person name="Terry A."/>
            <person name="Couronne O."/>
            <person name="Grimwood J."/>
            <person name="Lowry S."/>
            <person name="Gordon L.A."/>
            <person name="Scott D."/>
            <person name="Xie G."/>
            <person name="Huang W."/>
            <person name="Hellsten U."/>
            <person name="Tran-Gyamfi M."/>
            <person name="She X."/>
            <person name="Prabhakar S."/>
            <person name="Aerts A."/>
            <person name="Altherr M."/>
            <person name="Bajorek E."/>
            <person name="Black S."/>
            <person name="Branscomb E."/>
            <person name="Caoile C."/>
            <person name="Challacombe J.F."/>
            <person name="Chan Y.M."/>
            <person name="Denys M."/>
            <person name="Detter J.C."/>
            <person name="Escobar J."/>
            <person name="Flowers D."/>
            <person name="Fotopulos D."/>
            <person name="Glavina T."/>
            <person name="Gomez M."/>
            <person name="Gonzales E."/>
            <person name="Goodstein D."/>
            <person name="Grigoriev I."/>
            <person name="Groza M."/>
            <person name="Hammon N."/>
            <person name="Hawkins T."/>
            <person name="Haydu L."/>
            <person name="Israni S."/>
            <person name="Jett J."/>
            <person name="Kadner K."/>
            <person name="Kimball H."/>
            <person name="Kobayashi A."/>
            <person name="Lopez F."/>
            <person name="Lou Y."/>
            <person name="Martinez D."/>
            <person name="Medina C."/>
            <person name="Morgan J."/>
            <person name="Nandkeshwar R."/>
            <person name="Noonan J.P."/>
            <person name="Pitluck S."/>
            <person name="Pollard M."/>
            <person name="Predki P."/>
            <person name="Priest J."/>
            <person name="Ramirez L."/>
            <person name="Retterer J."/>
            <person name="Rodriguez A."/>
            <person name="Rogers S."/>
            <person name="Salamov A."/>
            <person name="Salazar A."/>
            <person name="Thayer N."/>
            <person name="Tice H."/>
            <person name="Tsai M."/>
            <person name="Ustaszewska A."/>
            <person name="Vo N."/>
            <person name="Wheeler J."/>
            <person name="Wu K."/>
            <person name="Yang J."/>
            <person name="Dickson M."/>
            <person name="Cheng J.-F."/>
            <person name="Eichler E.E."/>
            <person name="Olsen A."/>
            <person name="Pennacchio L.A."/>
            <person name="Rokhsar D.S."/>
            <person name="Richardson P."/>
            <person name="Lucas S.M."/>
            <person name="Myers R.M."/>
            <person name="Rubin E.M."/>
        </authorList>
    </citation>
    <scope>NUCLEOTIDE SEQUENCE [LARGE SCALE GENOMIC DNA]</scope>
</reference>
<reference key="4">
    <citation type="submission" date="2005-09" db="EMBL/GenBank/DDBJ databases">
        <authorList>
            <person name="Mural R.J."/>
            <person name="Istrail S."/>
            <person name="Sutton G.G."/>
            <person name="Florea L."/>
            <person name="Halpern A.L."/>
            <person name="Mobarry C.M."/>
            <person name="Lippert R."/>
            <person name="Walenz B."/>
            <person name="Shatkay H."/>
            <person name="Dew I."/>
            <person name="Miller J.R."/>
            <person name="Flanigan M.J."/>
            <person name="Edwards N.J."/>
            <person name="Bolanos R."/>
            <person name="Fasulo D."/>
            <person name="Halldorsson B.V."/>
            <person name="Hannenhalli S."/>
            <person name="Turner R."/>
            <person name="Yooseph S."/>
            <person name="Lu F."/>
            <person name="Nusskern D.R."/>
            <person name="Shue B.C."/>
            <person name="Zheng X.H."/>
            <person name="Zhong F."/>
            <person name="Delcher A.L."/>
            <person name="Huson D.H."/>
            <person name="Kravitz S.A."/>
            <person name="Mouchard L."/>
            <person name="Reinert K."/>
            <person name="Remington K.A."/>
            <person name="Clark A.G."/>
            <person name="Waterman M.S."/>
            <person name="Eichler E.E."/>
            <person name="Adams M.D."/>
            <person name="Hunkapiller M.W."/>
            <person name="Myers E.W."/>
            <person name="Venter J.C."/>
        </authorList>
    </citation>
    <scope>NUCLEOTIDE SEQUENCE [LARGE SCALE GENOMIC DNA]</scope>
</reference>
<reference key="5">
    <citation type="journal article" date="2004" name="Genome Res.">
        <title>The status, quality, and expansion of the NIH full-length cDNA project: the Mammalian Gene Collection (MGC).</title>
        <authorList>
            <consortium name="The MGC Project Team"/>
        </authorList>
    </citation>
    <scope>NUCLEOTIDE SEQUENCE [LARGE SCALE MRNA]</scope>
</reference>
<reference key="6">
    <citation type="journal article" date="2004" name="Protein Sci.">
        <title>Signal peptide prediction based on analysis of experimentally verified cleavage sites.</title>
        <authorList>
            <person name="Zhang Z."/>
            <person name="Henzel W.J."/>
        </authorList>
    </citation>
    <scope>PROTEIN SEQUENCE OF 24-38</scope>
</reference>
<reference key="7">
    <citation type="journal article" date="1998" name="Blood">
        <title>RP105 is associated with MD-1 and transmits an activation signal in human B cells.</title>
        <authorList>
            <person name="Miura Y."/>
            <person name="Shimazu R."/>
            <person name="Miyake K."/>
            <person name="Akashi S."/>
            <person name="Ogata H."/>
            <person name="Yamashita Y."/>
            <person name="Narisawa Y."/>
            <person name="Kimoto M."/>
        </authorList>
    </citation>
    <scope>INTERACTION WITH LY86</scope>
</reference>
<reference key="8">
    <citation type="journal article" date="2009" name="J. Proteome Res.">
        <title>Glycoproteomics analysis of human liver tissue by combination of multiple enzyme digestion and hydrazide chemistry.</title>
        <authorList>
            <person name="Chen R."/>
            <person name="Jiang X."/>
            <person name="Sun D."/>
            <person name="Han G."/>
            <person name="Wang F."/>
            <person name="Ye M."/>
            <person name="Wang L."/>
            <person name="Zou H."/>
        </authorList>
    </citation>
    <scope>GLYCOSYLATION [LARGE SCALE ANALYSIS] AT ASN-78</scope>
    <source>
        <tissue>Liver</tissue>
    </source>
</reference>
<reference key="9">
    <citation type="journal article" date="2011" name="J. Mol. Biol.">
        <title>Crystal structures of mouse and human RP105/MD-1 complexes reveal unique dimer organization of the toll-like receptor family.</title>
        <authorList>
            <person name="Ohto U."/>
            <person name="Miyake K."/>
            <person name="Shimizu T."/>
        </authorList>
    </citation>
    <scope>X-RAY CRYSTALLOGRAPHY (2.8 ANGSTROMS) OF 24-626 IN COMPLEX WITH LY86</scope>
    <scope>SUBUNIT</scope>
    <scope>GLYCOSYLATION AT ASN-402 AND ASN-451</scope>
</reference>
<dbReference type="EMBL" id="D83597">
    <property type="protein sequence ID" value="BAA12019.1"/>
    <property type="molecule type" value="mRNA"/>
</dbReference>
<dbReference type="EMBL" id="AK313177">
    <property type="protein sequence ID" value="BAG35994.1"/>
    <property type="molecule type" value="mRNA"/>
</dbReference>
<dbReference type="EMBL" id="AC026445">
    <property type="status" value="NOT_ANNOTATED_CDS"/>
    <property type="molecule type" value="Genomic_DNA"/>
</dbReference>
<dbReference type="EMBL" id="CH471137">
    <property type="protein sequence ID" value="EAW51318.1"/>
    <property type="molecule type" value="Genomic_DNA"/>
</dbReference>
<dbReference type="EMBL" id="BC109069">
    <property type="protein sequence ID" value="AAI09070.1"/>
    <property type="molecule type" value="mRNA"/>
</dbReference>
<dbReference type="EMBL" id="BC109070">
    <property type="protein sequence ID" value="AAI09071.1"/>
    <property type="molecule type" value="mRNA"/>
</dbReference>
<dbReference type="CCDS" id="CCDS3992.1"/>
<dbReference type="RefSeq" id="NP_005573.2">
    <property type="nucleotide sequence ID" value="NM_005582.3"/>
</dbReference>
<dbReference type="PDB" id="3B2D">
    <property type="method" value="X-ray"/>
    <property type="resolution" value="2.80 A"/>
    <property type="chains" value="A/B=24-626"/>
</dbReference>
<dbReference type="PDBsum" id="3B2D"/>
<dbReference type="SMR" id="Q99467"/>
<dbReference type="BioGRID" id="110242">
    <property type="interactions" value="1"/>
</dbReference>
<dbReference type="CORUM" id="Q99467"/>
<dbReference type="DIP" id="DIP-59104N"/>
<dbReference type="FunCoup" id="Q99467">
    <property type="interactions" value="29"/>
</dbReference>
<dbReference type="IntAct" id="Q99467">
    <property type="interactions" value="1"/>
</dbReference>
<dbReference type="STRING" id="9606.ENSP00000256447"/>
<dbReference type="GlyCosmos" id="Q99467">
    <property type="glycosylation" value="11 sites, No reported glycans"/>
</dbReference>
<dbReference type="GlyGen" id="Q99467">
    <property type="glycosylation" value="11 sites, 9 N-linked glycans (3 sites)"/>
</dbReference>
<dbReference type="iPTMnet" id="Q99467"/>
<dbReference type="PhosphoSitePlus" id="Q99467"/>
<dbReference type="BioMuta" id="CD180"/>
<dbReference type="DMDM" id="296434437"/>
<dbReference type="MassIVE" id="Q99467"/>
<dbReference type="PaxDb" id="9606-ENSP00000256447"/>
<dbReference type="PeptideAtlas" id="Q99467"/>
<dbReference type="ProteomicsDB" id="78284"/>
<dbReference type="Antibodypedia" id="1122">
    <property type="antibodies" value="436 antibodies from 37 providers"/>
</dbReference>
<dbReference type="DNASU" id="4064"/>
<dbReference type="Ensembl" id="ENST00000256447.5">
    <property type="protein sequence ID" value="ENSP00000256447.4"/>
    <property type="gene ID" value="ENSG00000134061.5"/>
</dbReference>
<dbReference type="GeneID" id="4064"/>
<dbReference type="KEGG" id="hsa:4064"/>
<dbReference type="MANE-Select" id="ENST00000256447.5">
    <property type="protein sequence ID" value="ENSP00000256447.4"/>
    <property type="RefSeq nucleotide sequence ID" value="NM_005582.3"/>
    <property type="RefSeq protein sequence ID" value="NP_005573.2"/>
</dbReference>
<dbReference type="UCSC" id="uc003juy.3">
    <property type="organism name" value="human"/>
</dbReference>
<dbReference type="AGR" id="HGNC:6726"/>
<dbReference type="CTD" id="4064"/>
<dbReference type="DisGeNET" id="4064"/>
<dbReference type="GeneCards" id="CD180"/>
<dbReference type="HGNC" id="HGNC:6726">
    <property type="gene designation" value="CD180"/>
</dbReference>
<dbReference type="HPA" id="ENSG00000134061">
    <property type="expression patterns" value="Tissue enhanced (lymphoid)"/>
</dbReference>
<dbReference type="MIM" id="602226">
    <property type="type" value="gene"/>
</dbReference>
<dbReference type="neXtProt" id="NX_Q99467"/>
<dbReference type="OpenTargets" id="ENSG00000134061"/>
<dbReference type="PharmGKB" id="PA30490"/>
<dbReference type="VEuPathDB" id="HostDB:ENSG00000134061"/>
<dbReference type="eggNOG" id="KOG4641">
    <property type="taxonomic scope" value="Eukaryota"/>
</dbReference>
<dbReference type="GeneTree" id="ENSGT00940000161183"/>
<dbReference type="HOGENOM" id="CLU_006000_5_1_1"/>
<dbReference type="InParanoid" id="Q99467"/>
<dbReference type="OMA" id="FLRWKYQ"/>
<dbReference type="OrthoDB" id="676979at2759"/>
<dbReference type="PAN-GO" id="Q99467">
    <property type="GO annotations" value="5 GO annotations based on evolutionary models"/>
</dbReference>
<dbReference type="PhylomeDB" id="Q99467"/>
<dbReference type="TreeFam" id="TF351113"/>
<dbReference type="PathwayCommons" id="Q99467"/>
<dbReference type="Reactome" id="R-HSA-166016">
    <property type="pathway name" value="Toll Like Receptor 4 (TLR4) Cascade"/>
</dbReference>
<dbReference type="SignaLink" id="Q99467"/>
<dbReference type="BioGRID-ORCS" id="4064">
    <property type="hits" value="9 hits in 1145 CRISPR screens"/>
</dbReference>
<dbReference type="ChiTaRS" id="CD180">
    <property type="organism name" value="human"/>
</dbReference>
<dbReference type="EvolutionaryTrace" id="Q99467"/>
<dbReference type="GeneWiki" id="CD180"/>
<dbReference type="GenomeRNAi" id="4064"/>
<dbReference type="Pharos" id="Q99467">
    <property type="development level" value="Tbio"/>
</dbReference>
<dbReference type="PRO" id="PR:Q99467"/>
<dbReference type="Proteomes" id="UP000005640">
    <property type="component" value="Chromosome 5"/>
</dbReference>
<dbReference type="RNAct" id="Q99467">
    <property type="molecule type" value="protein"/>
</dbReference>
<dbReference type="Bgee" id="ENSG00000134061">
    <property type="expression patterns" value="Expressed in pancreatic ductal cell and 116 other cell types or tissues"/>
</dbReference>
<dbReference type="GO" id="GO:0031012">
    <property type="term" value="C:extracellular matrix"/>
    <property type="evidence" value="ECO:0000318"/>
    <property type="project" value="GO_Central"/>
</dbReference>
<dbReference type="GO" id="GO:0005615">
    <property type="term" value="C:extracellular space"/>
    <property type="evidence" value="ECO:0000318"/>
    <property type="project" value="GO_Central"/>
</dbReference>
<dbReference type="GO" id="GO:0072686">
    <property type="term" value="C:mitotic spindle"/>
    <property type="evidence" value="ECO:0000314"/>
    <property type="project" value="HPA"/>
</dbReference>
<dbReference type="GO" id="GO:0005730">
    <property type="term" value="C:nucleolus"/>
    <property type="evidence" value="ECO:0000314"/>
    <property type="project" value="HPA"/>
</dbReference>
<dbReference type="GO" id="GO:0005654">
    <property type="term" value="C:nucleoplasm"/>
    <property type="evidence" value="ECO:0000314"/>
    <property type="project" value="HPA"/>
</dbReference>
<dbReference type="GO" id="GO:0005886">
    <property type="term" value="C:plasma membrane"/>
    <property type="evidence" value="ECO:0000314"/>
    <property type="project" value="HPA"/>
</dbReference>
<dbReference type="GO" id="GO:0002322">
    <property type="term" value="P:B cell proliferation involved in immune response"/>
    <property type="evidence" value="ECO:0000318"/>
    <property type="project" value="GO_Central"/>
</dbReference>
<dbReference type="GO" id="GO:0071222">
    <property type="term" value="P:cellular response to lipopolysaccharide"/>
    <property type="evidence" value="ECO:0000318"/>
    <property type="project" value="GO_Central"/>
</dbReference>
<dbReference type="GO" id="GO:0006954">
    <property type="term" value="P:inflammatory response"/>
    <property type="evidence" value="ECO:0007669"/>
    <property type="project" value="UniProtKB-KW"/>
</dbReference>
<dbReference type="GO" id="GO:0045087">
    <property type="term" value="P:innate immune response"/>
    <property type="evidence" value="ECO:0007669"/>
    <property type="project" value="UniProtKB-KW"/>
</dbReference>
<dbReference type="GO" id="GO:0031663">
    <property type="term" value="P:lipopolysaccharide-mediated signaling pathway"/>
    <property type="evidence" value="ECO:0007669"/>
    <property type="project" value="Ensembl"/>
</dbReference>
<dbReference type="GO" id="GO:0031666">
    <property type="term" value="P:positive regulation of lipopolysaccharide-mediated signaling pathway"/>
    <property type="evidence" value="ECO:0000316"/>
    <property type="project" value="MGI"/>
</dbReference>
<dbReference type="FunFam" id="3.80.10.10:FF:000302">
    <property type="entry name" value="CD180 antigen"/>
    <property type="match status" value="1"/>
</dbReference>
<dbReference type="Gene3D" id="3.80.10.10">
    <property type="entry name" value="Ribonuclease Inhibitor"/>
    <property type="match status" value="1"/>
</dbReference>
<dbReference type="InterPro" id="IPR000483">
    <property type="entry name" value="Cys-rich_flank_reg_C"/>
</dbReference>
<dbReference type="InterPro" id="IPR001611">
    <property type="entry name" value="Leu-rich_rpt"/>
</dbReference>
<dbReference type="InterPro" id="IPR003591">
    <property type="entry name" value="Leu-rich_rpt_typical-subtyp"/>
</dbReference>
<dbReference type="InterPro" id="IPR041281">
    <property type="entry name" value="LRR_11"/>
</dbReference>
<dbReference type="InterPro" id="IPR032675">
    <property type="entry name" value="LRR_dom_sf"/>
</dbReference>
<dbReference type="PANTHER" id="PTHR24365:SF530">
    <property type="entry name" value="MSTPROX-RELATED"/>
    <property type="match status" value="1"/>
</dbReference>
<dbReference type="PANTHER" id="PTHR24365">
    <property type="entry name" value="TOLL-LIKE RECEPTOR"/>
    <property type="match status" value="1"/>
</dbReference>
<dbReference type="Pfam" id="PF18831">
    <property type="entry name" value="LRR_11"/>
    <property type="match status" value="1"/>
</dbReference>
<dbReference type="Pfam" id="PF13855">
    <property type="entry name" value="LRR_8"/>
    <property type="match status" value="3"/>
</dbReference>
<dbReference type="SMART" id="SM00369">
    <property type="entry name" value="LRR_TYP"/>
    <property type="match status" value="8"/>
</dbReference>
<dbReference type="SMART" id="SM00082">
    <property type="entry name" value="LRRCT"/>
    <property type="match status" value="1"/>
</dbReference>
<dbReference type="SUPFAM" id="SSF52058">
    <property type="entry name" value="L domain-like"/>
    <property type="match status" value="2"/>
</dbReference>
<dbReference type="PROSITE" id="PS51450">
    <property type="entry name" value="LRR"/>
    <property type="match status" value="12"/>
</dbReference>
<protein>
    <recommendedName>
        <fullName>CD180 antigen</fullName>
    </recommendedName>
    <alternativeName>
        <fullName>Lymphocyte antigen 64</fullName>
    </alternativeName>
    <alternativeName>
        <fullName>Radioprotective 105 kDa protein</fullName>
    </alternativeName>
    <cdAntigenName>CD180</cdAntigenName>
</protein>
<comment type="function">
    <text evidence="1">May cooperate with MD-1 and TLR4 to mediate the innate immune response to bacterial lipopolysaccharide (LPS) in B-cells. Leads to NF-kappa-B activation. Also involved in the life/death decision of B-cells (By similarity).</text>
</comment>
<comment type="subunit">
    <text evidence="5">M-shaped tetramer of two CD180-LY86 heterodimers.</text>
</comment>
<comment type="interaction">
    <interactant intactId="EBI-15940363">
        <id>Q99467</id>
    </interactant>
    <interactant intactId="EBI-12203791">
        <id>O95711</id>
        <label>LY86</label>
    </interactant>
    <organismsDiffer>false</organismsDiffer>
    <experiments>3</experiments>
</comment>
<comment type="subcellular location">
    <subcellularLocation>
        <location>Cell membrane</location>
        <topology>Single-pass type I membrane protein</topology>
    </subcellularLocation>
</comment>
<comment type="tissue specificity">
    <text>Expressed mainly on mature peripherical B cells. Detected in spleen, lymph node and appendix. Not detected in pre-B and -T cells.</text>
</comment>
<comment type="similarity">
    <text evidence="6">Belongs to the Toll-like receptor family.</text>
</comment>
<gene>
    <name type="primary">CD180</name>
    <name type="synonym">LY64</name>
    <name type="synonym">RP105</name>
</gene>
<organism>
    <name type="scientific">Homo sapiens</name>
    <name type="common">Human</name>
    <dbReference type="NCBI Taxonomy" id="9606"/>
    <lineage>
        <taxon>Eukaryota</taxon>
        <taxon>Metazoa</taxon>
        <taxon>Chordata</taxon>
        <taxon>Craniata</taxon>
        <taxon>Vertebrata</taxon>
        <taxon>Euteleostomi</taxon>
        <taxon>Mammalia</taxon>
        <taxon>Eutheria</taxon>
        <taxon>Euarchontoglires</taxon>
        <taxon>Primates</taxon>
        <taxon>Haplorrhini</taxon>
        <taxon>Catarrhini</taxon>
        <taxon>Hominidae</taxon>
        <taxon>Homo</taxon>
    </lineage>
</organism>
<keyword id="KW-0002">3D-structure</keyword>
<keyword id="KW-1003">Cell membrane</keyword>
<keyword id="KW-0903">Direct protein sequencing</keyword>
<keyword id="KW-0325">Glycoprotein</keyword>
<keyword id="KW-0391">Immunity</keyword>
<keyword id="KW-0395">Inflammatory response</keyword>
<keyword id="KW-0399">Innate immunity</keyword>
<keyword id="KW-0433">Leucine-rich repeat</keyword>
<keyword id="KW-0472">Membrane</keyword>
<keyword id="KW-1267">Proteomics identification</keyword>
<keyword id="KW-0675">Receptor</keyword>
<keyword id="KW-1185">Reference proteome</keyword>
<keyword id="KW-0677">Repeat</keyword>
<keyword id="KW-0732">Signal</keyword>
<keyword id="KW-0812">Transmembrane</keyword>
<keyword id="KW-1133">Transmembrane helix</keyword>
<name>CD180_HUMAN</name>
<evidence type="ECO:0000250" key="1"/>
<evidence type="ECO:0000255" key="2"/>
<evidence type="ECO:0000269" key="3">
    <source>
    </source>
</evidence>
<evidence type="ECO:0000269" key="4">
    <source>
    </source>
</evidence>
<evidence type="ECO:0000269" key="5">
    <source>
    </source>
</evidence>
<evidence type="ECO:0000305" key="6"/>
<evidence type="ECO:0007829" key="7">
    <source>
        <dbReference type="PDB" id="3B2D"/>
    </source>
</evidence>